<comment type="function">
    <text evidence="1">Essential cell division protein that stabilizes the FtsZ protofilaments by cross-linking them and that serves as a cytoplasmic membrane anchor for the Z ring. Also required for the recruitment to the septal ring of downstream cell division proteins.</text>
</comment>
<comment type="subunit">
    <text evidence="1">Interacts with FtsZ via their C-terminal domains.</text>
</comment>
<comment type="subcellular location">
    <subcellularLocation>
        <location evidence="1">Cell inner membrane</location>
        <topology evidence="1">Single-pass type I membrane protein</topology>
    </subcellularLocation>
    <text evidence="1">Localizes to the Z ring in an FtsZ-dependent manner.</text>
</comment>
<comment type="similarity">
    <text evidence="1">Belongs to the ZipA family.</text>
</comment>
<keyword id="KW-0131">Cell cycle</keyword>
<keyword id="KW-0132">Cell division</keyword>
<keyword id="KW-0997">Cell inner membrane</keyword>
<keyword id="KW-1003">Cell membrane</keyword>
<keyword id="KW-0472">Membrane</keyword>
<keyword id="KW-0812">Transmembrane</keyword>
<keyword id="KW-1133">Transmembrane helix</keyword>
<feature type="chain" id="PRO_1000015143" description="Cell division protein ZipA">
    <location>
        <begin position="1"/>
        <end position="328"/>
    </location>
</feature>
<feature type="topological domain" description="Periplasmic" evidence="1">
    <location>
        <begin position="1"/>
        <end position="4"/>
    </location>
</feature>
<feature type="transmembrane region" description="Helical" evidence="1">
    <location>
        <begin position="5"/>
        <end position="25"/>
    </location>
</feature>
<feature type="topological domain" description="Cytoplasmic" evidence="1">
    <location>
        <begin position="26"/>
        <end position="328"/>
    </location>
</feature>
<feature type="region of interest" description="Disordered" evidence="2">
    <location>
        <begin position="44"/>
        <end position="82"/>
    </location>
</feature>
<feature type="compositionally biased region" description="Polar residues" evidence="2">
    <location>
        <begin position="57"/>
        <end position="81"/>
    </location>
</feature>
<proteinExistence type="inferred from homology"/>
<name>ZIPA_HAEIG</name>
<organism>
    <name type="scientific">Haemophilus influenzae (strain PittGG)</name>
    <dbReference type="NCBI Taxonomy" id="374931"/>
    <lineage>
        <taxon>Bacteria</taxon>
        <taxon>Pseudomonadati</taxon>
        <taxon>Pseudomonadota</taxon>
        <taxon>Gammaproteobacteria</taxon>
        <taxon>Pasteurellales</taxon>
        <taxon>Pasteurellaceae</taxon>
        <taxon>Haemophilus</taxon>
    </lineage>
</organism>
<protein>
    <recommendedName>
        <fullName evidence="1">Cell division protein ZipA</fullName>
    </recommendedName>
</protein>
<dbReference type="EMBL" id="CP000672">
    <property type="protein sequence ID" value="ABR00633.1"/>
    <property type="molecule type" value="Genomic_DNA"/>
</dbReference>
<dbReference type="SMR" id="A5UIM7"/>
<dbReference type="KEGG" id="hiq:CGSHiGG_09155"/>
<dbReference type="HOGENOM" id="CLU_030174_1_0_6"/>
<dbReference type="Proteomes" id="UP000001990">
    <property type="component" value="Chromosome"/>
</dbReference>
<dbReference type="GO" id="GO:0032153">
    <property type="term" value="C:cell division site"/>
    <property type="evidence" value="ECO:0007669"/>
    <property type="project" value="UniProtKB-UniRule"/>
</dbReference>
<dbReference type="GO" id="GO:0005886">
    <property type="term" value="C:plasma membrane"/>
    <property type="evidence" value="ECO:0007669"/>
    <property type="project" value="UniProtKB-SubCell"/>
</dbReference>
<dbReference type="GO" id="GO:0000917">
    <property type="term" value="P:division septum assembly"/>
    <property type="evidence" value="ECO:0007669"/>
    <property type="project" value="TreeGrafter"/>
</dbReference>
<dbReference type="GO" id="GO:0043093">
    <property type="term" value="P:FtsZ-dependent cytokinesis"/>
    <property type="evidence" value="ECO:0007669"/>
    <property type="project" value="UniProtKB-UniRule"/>
</dbReference>
<dbReference type="CDD" id="cd00231">
    <property type="entry name" value="ZipA"/>
    <property type="match status" value="1"/>
</dbReference>
<dbReference type="Gene3D" id="3.30.1400.10">
    <property type="entry name" value="ZipA, C-terminal FtsZ-binding domain"/>
    <property type="match status" value="1"/>
</dbReference>
<dbReference type="HAMAP" id="MF_00509">
    <property type="entry name" value="ZipA"/>
    <property type="match status" value="1"/>
</dbReference>
<dbReference type="InterPro" id="IPR011919">
    <property type="entry name" value="Cell_div_ZipA"/>
</dbReference>
<dbReference type="InterPro" id="IPR007449">
    <property type="entry name" value="ZipA_FtsZ-bd_C"/>
</dbReference>
<dbReference type="InterPro" id="IPR036765">
    <property type="entry name" value="ZipA_FtsZ-bd_C_sf"/>
</dbReference>
<dbReference type="NCBIfam" id="TIGR02205">
    <property type="entry name" value="septum_zipA"/>
    <property type="match status" value="1"/>
</dbReference>
<dbReference type="PANTHER" id="PTHR38685">
    <property type="entry name" value="CELL DIVISION PROTEIN ZIPA"/>
    <property type="match status" value="1"/>
</dbReference>
<dbReference type="PANTHER" id="PTHR38685:SF1">
    <property type="entry name" value="CELL DIVISION PROTEIN ZIPA"/>
    <property type="match status" value="1"/>
</dbReference>
<dbReference type="Pfam" id="PF04354">
    <property type="entry name" value="ZipA_C"/>
    <property type="match status" value="1"/>
</dbReference>
<dbReference type="SMART" id="SM00771">
    <property type="entry name" value="ZipA_C"/>
    <property type="match status" value="1"/>
</dbReference>
<dbReference type="SUPFAM" id="SSF64383">
    <property type="entry name" value="Cell-division protein ZipA, C-terminal domain"/>
    <property type="match status" value="1"/>
</dbReference>
<reference key="1">
    <citation type="journal article" date="2007" name="Genome Biol.">
        <title>Characterization and modeling of the Haemophilus influenzae core and supragenomes based on the complete genomic sequences of Rd and 12 clinical nontypeable strains.</title>
        <authorList>
            <person name="Hogg J.S."/>
            <person name="Hu F.Z."/>
            <person name="Janto B."/>
            <person name="Boissy R."/>
            <person name="Hayes J."/>
            <person name="Keefe R."/>
            <person name="Post J.C."/>
            <person name="Ehrlich G.D."/>
        </authorList>
    </citation>
    <scope>NUCLEOTIDE SEQUENCE [LARGE SCALE GENOMIC DNA]</scope>
    <source>
        <strain>PittGG</strain>
    </source>
</reference>
<gene>
    <name evidence="1" type="primary">zipA</name>
    <name type="ordered locus">CGSHiGG_09155</name>
</gene>
<accession>A5UIM7</accession>
<sequence>MDLNTILIIVGIVALVALIVHGLWSNRREKSKYFDKANKFDRTSLTSRSHTQEEMVQPNNISPNTYVENGHTPISQPTTEKLPSEAELIDYRQSDKSVDDIKISIPNTQPIYDMGNHRSEPIQPTQPQYDMPTANNVASMTLEQLEAQSQNVGFNGINSSSPELRVQLAELSHEEHQVDYNLSFNEPKAETTAQPKQTTGYIQLYLIPKSSEEFNGAKLVQALENLGFILGKDEMYHRHLDLSVASPVLFSVANLEQPGTFNAYNLAEFNTIGIVLFMQLPSPGNNLANLRMMMRAAHTLAEDLQGVILTEEQEIFDANAEQAYLARV</sequence>
<evidence type="ECO:0000255" key="1">
    <source>
        <dbReference type="HAMAP-Rule" id="MF_00509"/>
    </source>
</evidence>
<evidence type="ECO:0000256" key="2">
    <source>
        <dbReference type="SAM" id="MobiDB-lite"/>
    </source>
</evidence>